<organism>
    <name type="scientific">Mycobacterium leprae (strain TN)</name>
    <dbReference type="NCBI Taxonomy" id="272631"/>
    <lineage>
        <taxon>Bacteria</taxon>
        <taxon>Bacillati</taxon>
        <taxon>Actinomycetota</taxon>
        <taxon>Actinomycetes</taxon>
        <taxon>Mycobacteriales</taxon>
        <taxon>Mycobacteriaceae</taxon>
        <taxon>Mycobacterium</taxon>
    </lineage>
</organism>
<gene>
    <name type="primary">esxB</name>
    <name type="ordered locus">ML0050</name>
    <name type="ORF">MLCB628.13c</name>
</gene>
<evidence type="ECO:0000250" key="1"/>
<evidence type="ECO:0000250" key="2">
    <source>
        <dbReference type="UniProtKB" id="P9WNK5"/>
    </source>
</evidence>
<evidence type="ECO:0000269" key="3">
    <source>
    </source>
</evidence>
<evidence type="ECO:0000305" key="4"/>
<reference key="1">
    <citation type="submission" date="1997-08" db="EMBL/GenBank/DDBJ databases">
        <authorList>
            <person name="Eiglmeier K."/>
            <person name="Garnier T."/>
            <person name="De Rossi E."/>
            <person name="Fsihi H."/>
            <person name="Cole S.T."/>
        </authorList>
    </citation>
    <scope>NUCLEOTIDE SEQUENCE [GENOMIC DNA]</scope>
</reference>
<reference key="2">
    <citation type="journal article" date="2001" name="Nature">
        <title>Massive gene decay in the leprosy bacillus.</title>
        <authorList>
            <person name="Cole S.T."/>
            <person name="Eiglmeier K."/>
            <person name="Parkhill J."/>
            <person name="James K.D."/>
            <person name="Thomson N.R."/>
            <person name="Wheeler P.R."/>
            <person name="Honore N."/>
            <person name="Garnier T."/>
            <person name="Churcher C.M."/>
            <person name="Harris D.E."/>
            <person name="Mungall K.L."/>
            <person name="Basham D."/>
            <person name="Brown D."/>
            <person name="Chillingworth T."/>
            <person name="Connor R."/>
            <person name="Davies R.M."/>
            <person name="Devlin K."/>
            <person name="Duthoy S."/>
            <person name="Feltwell T."/>
            <person name="Fraser A."/>
            <person name="Hamlin N."/>
            <person name="Holroyd S."/>
            <person name="Hornsby T."/>
            <person name="Jagels K."/>
            <person name="Lacroix C."/>
            <person name="Maclean J."/>
            <person name="Moule S."/>
            <person name="Murphy L.D."/>
            <person name="Oliver K."/>
            <person name="Quail M.A."/>
            <person name="Rajandream M.A."/>
            <person name="Rutherford K.M."/>
            <person name="Rutter S."/>
            <person name="Seeger K."/>
            <person name="Simon S."/>
            <person name="Simmonds M."/>
            <person name="Skelton J."/>
            <person name="Squares R."/>
            <person name="Squares S."/>
            <person name="Stevens K."/>
            <person name="Taylor K."/>
            <person name="Whitehead S."/>
            <person name="Woodward J.R."/>
            <person name="Barrell B.G."/>
        </authorList>
    </citation>
    <scope>NUCLEOTIDE SEQUENCE [LARGE SCALE GENOMIC DNA]</scope>
    <source>
        <strain>TN</strain>
    </source>
</reference>
<reference key="3">
    <citation type="journal article" date="2010" name="FEBS Lett.">
        <title>Stoichiometric protein complex formation and over-expression using the prokaryotic native operon structure.</title>
        <authorList>
            <person name="Poulsen C."/>
            <person name="Holton S."/>
            <person name="Geerlof A."/>
            <person name="Wilmanns M."/>
            <person name="Song Y.H."/>
        </authorList>
    </citation>
    <scope>SUBUNIT</scope>
    <source>
        <strain>TN</strain>
    </source>
</reference>
<proteinExistence type="evidence at protein level"/>
<dbReference type="EMBL" id="Y14967">
    <property type="protein sequence ID" value="CAA75210.1"/>
    <property type="molecule type" value="Genomic_DNA"/>
</dbReference>
<dbReference type="EMBL" id="AL583917">
    <property type="protein sequence ID" value="CAC29558.1"/>
    <property type="molecule type" value="Genomic_DNA"/>
</dbReference>
<dbReference type="PIR" id="T10032">
    <property type="entry name" value="T10032"/>
</dbReference>
<dbReference type="RefSeq" id="NP_301163.1">
    <property type="nucleotide sequence ID" value="NC_002677.1"/>
</dbReference>
<dbReference type="RefSeq" id="WP_010907488.1">
    <property type="nucleotide sequence ID" value="NC_002677.1"/>
</dbReference>
<dbReference type="SMR" id="O33084"/>
<dbReference type="IntAct" id="O33084">
    <property type="interactions" value="1"/>
</dbReference>
<dbReference type="MINT" id="O33084"/>
<dbReference type="STRING" id="272631.gene:17573862"/>
<dbReference type="KEGG" id="mle:ML0050"/>
<dbReference type="PATRIC" id="fig|272631.5.peg.73"/>
<dbReference type="Leproma" id="ML0050"/>
<dbReference type="eggNOG" id="COG4842">
    <property type="taxonomic scope" value="Bacteria"/>
</dbReference>
<dbReference type="HOGENOM" id="CLU_178469_0_0_11"/>
<dbReference type="OrthoDB" id="4736299at2"/>
<dbReference type="Proteomes" id="UP000000806">
    <property type="component" value="Chromosome"/>
</dbReference>
<dbReference type="GO" id="GO:0005576">
    <property type="term" value="C:extracellular region"/>
    <property type="evidence" value="ECO:0007669"/>
    <property type="project" value="UniProtKB-SubCell"/>
</dbReference>
<dbReference type="Gene3D" id="1.10.287.1060">
    <property type="entry name" value="ESAT-6-like"/>
    <property type="match status" value="1"/>
</dbReference>
<dbReference type="InterPro" id="IPR036689">
    <property type="entry name" value="ESAT-6-like_sf"/>
</dbReference>
<dbReference type="InterPro" id="IPR010310">
    <property type="entry name" value="T7SS_ESAT-6-like"/>
</dbReference>
<dbReference type="NCBIfam" id="TIGR03930">
    <property type="entry name" value="WXG100_ESAT6"/>
    <property type="match status" value="1"/>
</dbReference>
<dbReference type="Pfam" id="PF06013">
    <property type="entry name" value="WXG100"/>
    <property type="match status" value="1"/>
</dbReference>
<dbReference type="SUPFAM" id="SSF140453">
    <property type="entry name" value="EsxAB dimer-like"/>
    <property type="match status" value="1"/>
</dbReference>
<accession>O33084</accession>
<protein>
    <recommendedName>
        <fullName>ESAT-6-like protein EsxB</fullName>
    </recommendedName>
</protein>
<feature type="initiator methionine" description="Removed" evidence="1">
    <location>
        <position position="1"/>
    </location>
</feature>
<feature type="chain" id="PRO_0000167795" description="ESAT-6-like protein EsxB">
    <location>
        <begin position="2"/>
        <end position="100"/>
    </location>
</feature>
<comment type="function">
    <text evidence="2">A secreted protein that might play a role in virulence. Might serve as a chaperone to prevent uncontrolled membrane lysis by its partner EsxA.</text>
</comment>
<comment type="subunit">
    <text evidence="3">Forms a tight 1:1 complex with EsxA (PubMed:20085764).</text>
</comment>
<comment type="subcellular location">
    <subcellularLocation>
        <location evidence="2">Secreted</location>
    </subcellularLocation>
    <text evidence="2">Probably secreted via the ESX-1 / type VII secretion system (T7SS).</text>
</comment>
<comment type="similarity">
    <text evidence="4">Belongs to the WXG100 family. CFP-10 subfamily.</text>
</comment>
<sequence length="100" mass="10964">MAEMITEAAILTQQAAQFDQIASGLSQERNFVDSIGQSFQNTWEGQAASAALGALGRFDEAMQDQIRQLESIVDKLNRSGGNYTKTDDEANQLLSSKMNF</sequence>
<name>ESXB_MYCLE</name>
<keyword id="KW-0143">Chaperone</keyword>
<keyword id="KW-1185">Reference proteome</keyword>
<keyword id="KW-0964">Secreted</keyword>
<keyword id="KW-0843">Virulence</keyword>